<name>TRMFO_BACVZ</name>
<feature type="chain" id="PRO_1000072976" description="Methylenetetrahydrofolate--tRNA-(uracil-5-)-methyltransferase TrmFO">
    <location>
        <begin position="1"/>
        <end position="435"/>
    </location>
</feature>
<feature type="binding site" evidence="1">
    <location>
        <begin position="10"/>
        <end position="15"/>
    </location>
    <ligand>
        <name>FAD</name>
        <dbReference type="ChEBI" id="CHEBI:57692"/>
    </ligand>
</feature>
<dbReference type="EC" id="2.1.1.74" evidence="1"/>
<dbReference type="EMBL" id="CP000560">
    <property type="protein sequence ID" value="ABS73959.1"/>
    <property type="molecule type" value="Genomic_DNA"/>
</dbReference>
<dbReference type="RefSeq" id="WP_012117550.1">
    <property type="nucleotide sequence ID" value="NC_009725.2"/>
</dbReference>
<dbReference type="SMR" id="A7Z4N3"/>
<dbReference type="GeneID" id="93080729"/>
<dbReference type="KEGG" id="bay:RBAM_015960"/>
<dbReference type="HOGENOM" id="CLU_033057_1_0_9"/>
<dbReference type="Proteomes" id="UP000001120">
    <property type="component" value="Chromosome"/>
</dbReference>
<dbReference type="GO" id="GO:0005829">
    <property type="term" value="C:cytosol"/>
    <property type="evidence" value="ECO:0007669"/>
    <property type="project" value="TreeGrafter"/>
</dbReference>
<dbReference type="GO" id="GO:0050660">
    <property type="term" value="F:flavin adenine dinucleotide binding"/>
    <property type="evidence" value="ECO:0007669"/>
    <property type="project" value="UniProtKB-UniRule"/>
</dbReference>
<dbReference type="GO" id="GO:0047151">
    <property type="term" value="F:tRNA (uracil(54)-C5)-methyltransferase activity, 5,10-methylenetetrahydrofolate-dependent"/>
    <property type="evidence" value="ECO:0007669"/>
    <property type="project" value="UniProtKB-UniRule"/>
</dbReference>
<dbReference type="GO" id="GO:0030488">
    <property type="term" value="P:tRNA methylation"/>
    <property type="evidence" value="ECO:0007669"/>
    <property type="project" value="TreeGrafter"/>
</dbReference>
<dbReference type="GO" id="GO:0002098">
    <property type="term" value="P:tRNA wobble uridine modification"/>
    <property type="evidence" value="ECO:0007669"/>
    <property type="project" value="TreeGrafter"/>
</dbReference>
<dbReference type="FunFam" id="3.50.50.60:FF:000035">
    <property type="entry name" value="Methylenetetrahydrofolate--tRNA-(uracil-5-)-methyltransferase TrmFO"/>
    <property type="match status" value="1"/>
</dbReference>
<dbReference type="FunFam" id="3.50.50.60:FF:000040">
    <property type="entry name" value="Methylenetetrahydrofolate--tRNA-(uracil-5-)-methyltransferase TrmFO"/>
    <property type="match status" value="1"/>
</dbReference>
<dbReference type="Gene3D" id="3.50.50.60">
    <property type="entry name" value="FAD/NAD(P)-binding domain"/>
    <property type="match status" value="2"/>
</dbReference>
<dbReference type="HAMAP" id="MF_01037">
    <property type="entry name" value="TrmFO"/>
    <property type="match status" value="1"/>
</dbReference>
<dbReference type="InterPro" id="IPR036188">
    <property type="entry name" value="FAD/NAD-bd_sf"/>
</dbReference>
<dbReference type="InterPro" id="IPR002218">
    <property type="entry name" value="MnmG-rel"/>
</dbReference>
<dbReference type="InterPro" id="IPR020595">
    <property type="entry name" value="MnmG-rel_CS"/>
</dbReference>
<dbReference type="InterPro" id="IPR040131">
    <property type="entry name" value="MnmG_N"/>
</dbReference>
<dbReference type="InterPro" id="IPR004417">
    <property type="entry name" value="TrmFO"/>
</dbReference>
<dbReference type="NCBIfam" id="TIGR00137">
    <property type="entry name" value="gid_trmFO"/>
    <property type="match status" value="1"/>
</dbReference>
<dbReference type="NCBIfam" id="NF003739">
    <property type="entry name" value="PRK05335.1"/>
    <property type="match status" value="1"/>
</dbReference>
<dbReference type="PANTHER" id="PTHR11806">
    <property type="entry name" value="GLUCOSE INHIBITED DIVISION PROTEIN A"/>
    <property type="match status" value="1"/>
</dbReference>
<dbReference type="PANTHER" id="PTHR11806:SF2">
    <property type="entry name" value="METHYLENETETRAHYDROFOLATE--TRNA-(URACIL-5-)-METHYLTRANSFERASE TRMFO"/>
    <property type="match status" value="1"/>
</dbReference>
<dbReference type="Pfam" id="PF01134">
    <property type="entry name" value="GIDA"/>
    <property type="match status" value="1"/>
</dbReference>
<dbReference type="SUPFAM" id="SSF51905">
    <property type="entry name" value="FAD/NAD(P)-binding domain"/>
    <property type="match status" value="1"/>
</dbReference>
<dbReference type="PROSITE" id="PS01281">
    <property type="entry name" value="GIDA_2"/>
    <property type="match status" value="1"/>
</dbReference>
<sequence length="435" mass="48258">MNQQTVNVIGAGLAGSEAAWQLAKRGIQVKLYEMRPVRQTAAHHTDKFAELVCSNSLRSNTLANAVGVLKEEMRALDSAIIQSADKCSVPAGGALAVDRHEFAQSVTDLVKNHPNVTVLTEEVTEIPEGPTVIATGPLTSESLSQQLKELTGEEYLYFYDAAAPIVEKDSLDMEKVYLKSRYDKGEAAYLNCPMTEEEFDRFYEALTTAETVPLKEFEKEIFFEGCMPIEVMAKRGKKTMLFGPMKPVGLEDPKTGKRPYAVVQLRQDDAAGTLYNIVGFQTHLKWGDQKEVLKLIPGLENVDIVRYGVMHRNTFINSPSLLNPTYQFKQRNDLFFAGQMTGVEGYVESAASGLVAGINAAKLVLGQDLVTFPQETAIGSMAHYITTTNQKNFQPMNANFGLLKELPVKIKNKKERNEEYAKRAIETIQTISKTI</sequence>
<accession>A7Z4N3</accession>
<keyword id="KW-0963">Cytoplasm</keyword>
<keyword id="KW-0274">FAD</keyword>
<keyword id="KW-0285">Flavoprotein</keyword>
<keyword id="KW-0489">Methyltransferase</keyword>
<keyword id="KW-0520">NAD</keyword>
<keyword id="KW-0521">NADP</keyword>
<keyword id="KW-0808">Transferase</keyword>
<keyword id="KW-0819">tRNA processing</keyword>
<protein>
    <recommendedName>
        <fullName evidence="1">Methylenetetrahydrofolate--tRNA-(uracil-5-)-methyltransferase TrmFO</fullName>
        <ecNumber evidence="1">2.1.1.74</ecNumber>
    </recommendedName>
    <alternativeName>
        <fullName evidence="1">Folate-dependent tRNA (uracil-5-)-methyltransferase</fullName>
    </alternativeName>
    <alternativeName>
        <fullName evidence="1">Folate-dependent tRNA(M-5-U54)-methyltransferase</fullName>
    </alternativeName>
</protein>
<proteinExistence type="inferred from homology"/>
<comment type="function">
    <text evidence="1">Catalyzes the folate-dependent formation of 5-methyl-uridine at position 54 (M-5-U54) in all tRNAs.</text>
</comment>
<comment type="catalytic activity">
    <reaction evidence="1">
        <text>uridine(54) in tRNA + (6R)-5,10-methylene-5,6,7,8-tetrahydrofolate + NADH + H(+) = 5-methyluridine(54) in tRNA + (6S)-5,6,7,8-tetrahydrofolate + NAD(+)</text>
        <dbReference type="Rhea" id="RHEA:16873"/>
        <dbReference type="Rhea" id="RHEA-COMP:10167"/>
        <dbReference type="Rhea" id="RHEA-COMP:10193"/>
        <dbReference type="ChEBI" id="CHEBI:15378"/>
        <dbReference type="ChEBI" id="CHEBI:15636"/>
        <dbReference type="ChEBI" id="CHEBI:57453"/>
        <dbReference type="ChEBI" id="CHEBI:57540"/>
        <dbReference type="ChEBI" id="CHEBI:57945"/>
        <dbReference type="ChEBI" id="CHEBI:65315"/>
        <dbReference type="ChEBI" id="CHEBI:74447"/>
        <dbReference type="EC" id="2.1.1.74"/>
    </reaction>
</comment>
<comment type="catalytic activity">
    <reaction evidence="1">
        <text>uridine(54) in tRNA + (6R)-5,10-methylene-5,6,7,8-tetrahydrofolate + NADPH + H(+) = 5-methyluridine(54) in tRNA + (6S)-5,6,7,8-tetrahydrofolate + NADP(+)</text>
        <dbReference type="Rhea" id="RHEA:62372"/>
        <dbReference type="Rhea" id="RHEA-COMP:10167"/>
        <dbReference type="Rhea" id="RHEA-COMP:10193"/>
        <dbReference type="ChEBI" id="CHEBI:15378"/>
        <dbReference type="ChEBI" id="CHEBI:15636"/>
        <dbReference type="ChEBI" id="CHEBI:57453"/>
        <dbReference type="ChEBI" id="CHEBI:57783"/>
        <dbReference type="ChEBI" id="CHEBI:58349"/>
        <dbReference type="ChEBI" id="CHEBI:65315"/>
        <dbReference type="ChEBI" id="CHEBI:74447"/>
        <dbReference type="EC" id="2.1.1.74"/>
    </reaction>
</comment>
<comment type="cofactor">
    <cofactor evidence="1">
        <name>FAD</name>
        <dbReference type="ChEBI" id="CHEBI:57692"/>
    </cofactor>
</comment>
<comment type="subcellular location">
    <subcellularLocation>
        <location evidence="1">Cytoplasm</location>
    </subcellularLocation>
</comment>
<comment type="similarity">
    <text evidence="1">Belongs to the MnmG family. TrmFO subfamily.</text>
</comment>
<reference key="1">
    <citation type="journal article" date="2007" name="Nat. Biotechnol.">
        <title>Comparative analysis of the complete genome sequence of the plant growth-promoting bacterium Bacillus amyloliquefaciens FZB42.</title>
        <authorList>
            <person name="Chen X.H."/>
            <person name="Koumoutsi A."/>
            <person name="Scholz R."/>
            <person name="Eisenreich A."/>
            <person name="Schneider K."/>
            <person name="Heinemeyer I."/>
            <person name="Morgenstern B."/>
            <person name="Voss B."/>
            <person name="Hess W.R."/>
            <person name="Reva O."/>
            <person name="Junge H."/>
            <person name="Voigt B."/>
            <person name="Jungblut P.R."/>
            <person name="Vater J."/>
            <person name="Suessmuth R."/>
            <person name="Liesegang H."/>
            <person name="Strittmatter A."/>
            <person name="Gottschalk G."/>
            <person name="Borriss R."/>
        </authorList>
    </citation>
    <scope>NUCLEOTIDE SEQUENCE [LARGE SCALE GENOMIC DNA]</scope>
    <source>
        <strain>DSM 23117 / BGSC 10A6 / LMG 26770 / FZB42</strain>
    </source>
</reference>
<gene>
    <name evidence="1" type="primary">trmFO</name>
    <name type="synonym">gid</name>
    <name type="ordered locus">RBAM_015960</name>
</gene>
<organism>
    <name type="scientific">Bacillus velezensis (strain DSM 23117 / BGSC 10A6 / LMG 26770 / FZB42)</name>
    <name type="common">Bacillus amyloliquefaciens subsp. plantarum</name>
    <dbReference type="NCBI Taxonomy" id="326423"/>
    <lineage>
        <taxon>Bacteria</taxon>
        <taxon>Bacillati</taxon>
        <taxon>Bacillota</taxon>
        <taxon>Bacilli</taxon>
        <taxon>Bacillales</taxon>
        <taxon>Bacillaceae</taxon>
        <taxon>Bacillus</taxon>
        <taxon>Bacillus amyloliquefaciens group</taxon>
    </lineage>
</organism>
<evidence type="ECO:0000255" key="1">
    <source>
        <dbReference type="HAMAP-Rule" id="MF_01037"/>
    </source>
</evidence>